<sequence length="487" mass="53946">MKSMIEGVKKDGKKGRRNDRKDSWDKDGFTQRGRAEKKPVDLAKIQGIQGQIGIGKNKGDGNRLDCGMDKEEAEDGKDIMRCRHLSPGGGGMKRLLSEDVRETEGIGWESLGLGPVLLKRIRDIGYDFPSPVQVASIPHVLGGKNLLVRSKNGTGKTASYIVPMLNMINSSELSIQGIILVPIRELALQISRNVKRMSEGTGVISAPVVGGTSMQDDIIRVSNGVHVMVGTPGRIVDLVEKRVGTLSKRVILVFDEADKLLDVTFGETVTKLLDLLPREKQMLLYSATFPYFVTGFIRRYMKNPLCINLMKELAPVGVKQFYTYVKPSEKLLCLKSLLLRLSINQCVIFCNSIKTVELLAMKITEMGLPSYFIHSKMAQEDRNIVFHNFLKGKCKILVATDLITRGVDAPNTNYVINFDISKSPESYLHRIGRAGRFGAPGVAISLVTTEEKEMLMDIEAKLGKEISPLSDKGLSRLHESNIDRNQG</sequence>
<feature type="chain" id="PRO_0000255995" description="ATP-dependent RNA helicase DHH1">
    <location>
        <begin position="1"/>
        <end position="487"/>
    </location>
</feature>
<feature type="domain" description="Helicase ATP-binding" evidence="2">
    <location>
        <begin position="137"/>
        <end position="307"/>
    </location>
</feature>
<feature type="domain" description="Helicase C-terminal" evidence="3">
    <location>
        <begin position="317"/>
        <end position="478"/>
    </location>
</feature>
<feature type="region of interest" description="Disordered" evidence="4">
    <location>
        <begin position="1"/>
        <end position="42"/>
    </location>
</feature>
<feature type="short sequence motif" description="Q motif">
    <location>
        <begin position="106"/>
        <end position="134"/>
    </location>
</feature>
<feature type="short sequence motif" description="DEAD box">
    <location>
        <begin position="255"/>
        <end position="258"/>
    </location>
</feature>
<feature type="compositionally biased region" description="Basic and acidic residues" evidence="4">
    <location>
        <begin position="19"/>
        <end position="41"/>
    </location>
</feature>
<feature type="binding site" evidence="2">
    <location>
        <begin position="150"/>
        <end position="157"/>
    </location>
    <ligand>
        <name>ATP</name>
        <dbReference type="ChEBI" id="CHEBI:30616"/>
    </ligand>
</feature>
<accession>Q8SQK9</accession>
<comment type="function">
    <text evidence="1">ATP-dependent RNA helicase involved in mRNA turnover, and more specifically in mRNA decapping. Is involved in G1/S DNA-damage checkpoint recovery, probably through the regulation of the translational status of a subset of mRNAs. May also have a role in translation and mRNA nuclear export (By similarity).</text>
</comment>
<comment type="catalytic activity">
    <reaction>
        <text>ATP + H2O = ADP + phosphate + H(+)</text>
        <dbReference type="Rhea" id="RHEA:13065"/>
        <dbReference type="ChEBI" id="CHEBI:15377"/>
        <dbReference type="ChEBI" id="CHEBI:15378"/>
        <dbReference type="ChEBI" id="CHEBI:30616"/>
        <dbReference type="ChEBI" id="CHEBI:43474"/>
        <dbReference type="ChEBI" id="CHEBI:456216"/>
        <dbReference type="EC" id="3.6.4.13"/>
    </reaction>
</comment>
<comment type="subcellular location">
    <subcellularLocation>
        <location evidence="1">Cytoplasm</location>
        <location evidence="1">P-body</location>
    </subcellularLocation>
    <text evidence="1">Is concentrated in several cytoplasmic foci called P bodies (or cytoplasmic processing bodies) which represent sites of mRNA decapping and 5' to 3' exonucleotidic decay.</text>
</comment>
<comment type="domain">
    <text>The Q motif is unique to and characteristic of the DEAD box family of RNA helicases and controls ATP binding and hydrolysis.</text>
</comment>
<comment type="similarity">
    <text evidence="5">Belongs to the DEAD box helicase family. DDX6/DHH1 subfamily.</text>
</comment>
<evidence type="ECO:0000250" key="1"/>
<evidence type="ECO:0000255" key="2">
    <source>
        <dbReference type="PROSITE-ProRule" id="PRU00541"/>
    </source>
</evidence>
<evidence type="ECO:0000255" key="3">
    <source>
        <dbReference type="PROSITE-ProRule" id="PRU00542"/>
    </source>
</evidence>
<evidence type="ECO:0000256" key="4">
    <source>
        <dbReference type="SAM" id="MobiDB-lite"/>
    </source>
</evidence>
<evidence type="ECO:0000305" key="5"/>
<gene>
    <name type="primary">DHH1</name>
    <name type="ordered locus">ECU09_1640</name>
</gene>
<proteinExistence type="inferred from homology"/>
<keyword id="KW-0067">ATP-binding</keyword>
<keyword id="KW-0963">Cytoplasm</keyword>
<keyword id="KW-0347">Helicase</keyword>
<keyword id="KW-0378">Hydrolase</keyword>
<keyword id="KW-0507">mRNA processing</keyword>
<keyword id="KW-0509">mRNA transport</keyword>
<keyword id="KW-0547">Nucleotide-binding</keyword>
<keyword id="KW-1185">Reference proteome</keyword>
<keyword id="KW-0694">RNA-binding</keyword>
<keyword id="KW-0810">Translation regulation</keyword>
<keyword id="KW-0813">Transport</keyword>
<name>DHH1_ENCCU</name>
<protein>
    <recommendedName>
        <fullName>ATP-dependent RNA helicase DHH1</fullName>
        <ecNumber>3.6.4.13</ecNumber>
    </recommendedName>
</protein>
<dbReference type="EC" id="3.6.4.13"/>
<dbReference type="EMBL" id="AL590451">
    <property type="protein sequence ID" value="CAD27136.2"/>
    <property type="molecule type" value="Genomic_DNA"/>
</dbReference>
<dbReference type="RefSeq" id="XP_955717.1">
    <property type="nucleotide sequence ID" value="XM_950624.1"/>
</dbReference>
<dbReference type="SMR" id="Q8SQK9"/>
<dbReference type="FunCoup" id="Q8SQK9">
    <property type="interactions" value="311"/>
</dbReference>
<dbReference type="STRING" id="284813.Q8SQK9"/>
<dbReference type="VEuPathDB" id="MicrosporidiaDB:ECU09_1640"/>
<dbReference type="HOGENOM" id="CLU_003041_1_0_1"/>
<dbReference type="InParanoid" id="Q8SQK9"/>
<dbReference type="OrthoDB" id="10265785at2759"/>
<dbReference type="Proteomes" id="UP000000819">
    <property type="component" value="Chromosome IX"/>
</dbReference>
<dbReference type="GO" id="GO:0000932">
    <property type="term" value="C:P-body"/>
    <property type="evidence" value="ECO:0007669"/>
    <property type="project" value="UniProtKB-SubCell"/>
</dbReference>
<dbReference type="GO" id="GO:0005524">
    <property type="term" value="F:ATP binding"/>
    <property type="evidence" value="ECO:0007669"/>
    <property type="project" value="UniProtKB-KW"/>
</dbReference>
<dbReference type="GO" id="GO:0016887">
    <property type="term" value="F:ATP hydrolysis activity"/>
    <property type="evidence" value="ECO:0007669"/>
    <property type="project" value="RHEA"/>
</dbReference>
<dbReference type="GO" id="GO:0003723">
    <property type="term" value="F:RNA binding"/>
    <property type="evidence" value="ECO:0007669"/>
    <property type="project" value="UniProtKB-KW"/>
</dbReference>
<dbReference type="GO" id="GO:0003724">
    <property type="term" value="F:RNA helicase activity"/>
    <property type="evidence" value="ECO:0007669"/>
    <property type="project" value="UniProtKB-EC"/>
</dbReference>
<dbReference type="GO" id="GO:0006397">
    <property type="term" value="P:mRNA processing"/>
    <property type="evidence" value="ECO:0007669"/>
    <property type="project" value="UniProtKB-KW"/>
</dbReference>
<dbReference type="GO" id="GO:0051028">
    <property type="term" value="P:mRNA transport"/>
    <property type="evidence" value="ECO:0007669"/>
    <property type="project" value="UniProtKB-KW"/>
</dbReference>
<dbReference type="GO" id="GO:0006417">
    <property type="term" value="P:regulation of translation"/>
    <property type="evidence" value="ECO:0007669"/>
    <property type="project" value="UniProtKB-KW"/>
</dbReference>
<dbReference type="CDD" id="cd17940">
    <property type="entry name" value="DEADc_DDX6"/>
    <property type="match status" value="1"/>
</dbReference>
<dbReference type="CDD" id="cd18787">
    <property type="entry name" value="SF2_C_DEAD"/>
    <property type="match status" value="1"/>
</dbReference>
<dbReference type="Gene3D" id="3.40.50.300">
    <property type="entry name" value="P-loop containing nucleotide triphosphate hydrolases"/>
    <property type="match status" value="2"/>
</dbReference>
<dbReference type="InterPro" id="IPR011545">
    <property type="entry name" value="DEAD/DEAH_box_helicase_dom"/>
</dbReference>
<dbReference type="InterPro" id="IPR014001">
    <property type="entry name" value="Helicase_ATP-bd"/>
</dbReference>
<dbReference type="InterPro" id="IPR001650">
    <property type="entry name" value="Helicase_C-like"/>
</dbReference>
<dbReference type="InterPro" id="IPR027417">
    <property type="entry name" value="P-loop_NTPase"/>
</dbReference>
<dbReference type="InterPro" id="IPR000629">
    <property type="entry name" value="RNA-helicase_DEAD-box_CS"/>
</dbReference>
<dbReference type="InterPro" id="IPR014014">
    <property type="entry name" value="RNA_helicase_DEAD_Q_motif"/>
</dbReference>
<dbReference type="PANTHER" id="PTHR47960">
    <property type="entry name" value="DEAD-BOX ATP-DEPENDENT RNA HELICASE 50"/>
    <property type="match status" value="1"/>
</dbReference>
<dbReference type="Pfam" id="PF00270">
    <property type="entry name" value="DEAD"/>
    <property type="match status" value="1"/>
</dbReference>
<dbReference type="Pfam" id="PF00271">
    <property type="entry name" value="Helicase_C"/>
    <property type="match status" value="1"/>
</dbReference>
<dbReference type="SMART" id="SM00487">
    <property type="entry name" value="DEXDc"/>
    <property type="match status" value="1"/>
</dbReference>
<dbReference type="SMART" id="SM00490">
    <property type="entry name" value="HELICc"/>
    <property type="match status" value="1"/>
</dbReference>
<dbReference type="SUPFAM" id="SSF52540">
    <property type="entry name" value="P-loop containing nucleoside triphosphate hydrolases"/>
    <property type="match status" value="1"/>
</dbReference>
<dbReference type="PROSITE" id="PS00039">
    <property type="entry name" value="DEAD_ATP_HELICASE"/>
    <property type="match status" value="1"/>
</dbReference>
<dbReference type="PROSITE" id="PS51192">
    <property type="entry name" value="HELICASE_ATP_BIND_1"/>
    <property type="match status" value="1"/>
</dbReference>
<dbReference type="PROSITE" id="PS51194">
    <property type="entry name" value="HELICASE_CTER"/>
    <property type="match status" value="1"/>
</dbReference>
<dbReference type="PROSITE" id="PS51195">
    <property type="entry name" value="Q_MOTIF"/>
    <property type="match status" value="1"/>
</dbReference>
<organism>
    <name type="scientific">Encephalitozoon cuniculi (strain GB-M1)</name>
    <name type="common">Microsporidian parasite</name>
    <dbReference type="NCBI Taxonomy" id="284813"/>
    <lineage>
        <taxon>Eukaryota</taxon>
        <taxon>Fungi</taxon>
        <taxon>Fungi incertae sedis</taxon>
        <taxon>Microsporidia</taxon>
        <taxon>Unikaryonidae</taxon>
        <taxon>Encephalitozoon</taxon>
    </lineage>
</organism>
<reference key="1">
    <citation type="journal article" date="2001" name="Nature">
        <title>Genome sequence and gene compaction of the eukaryote parasite Encephalitozoon cuniculi.</title>
        <authorList>
            <person name="Katinka M.D."/>
            <person name="Duprat S."/>
            <person name="Cornillot E."/>
            <person name="Metenier G."/>
            <person name="Thomarat F."/>
            <person name="Prensier G."/>
            <person name="Barbe V."/>
            <person name="Peyretaillade E."/>
            <person name="Brottier P."/>
            <person name="Wincker P."/>
            <person name="Delbac F."/>
            <person name="El Alaoui H."/>
            <person name="Peyret P."/>
            <person name="Saurin W."/>
            <person name="Gouy M."/>
            <person name="Weissenbach J."/>
            <person name="Vivares C.P."/>
        </authorList>
    </citation>
    <scope>NUCLEOTIDE SEQUENCE [LARGE SCALE GENOMIC DNA]</scope>
    <source>
        <strain>GB-M1</strain>
    </source>
</reference>
<reference key="2">
    <citation type="journal article" date="2009" name="BMC Genomics">
        <title>Identification of transcriptional signals in Encephalitozoon cuniculi widespread among Microsporidia phylum: support for accurate structural genome annotation.</title>
        <authorList>
            <person name="Peyretaillade E."/>
            <person name="Goncalves O."/>
            <person name="Terrat S."/>
            <person name="Dugat-Bony E."/>
            <person name="Wincker P."/>
            <person name="Cornman R.S."/>
            <person name="Evans J.D."/>
            <person name="Delbac F."/>
            <person name="Peyret P."/>
        </authorList>
    </citation>
    <scope>GENOME REANNOTATION</scope>
    <source>
        <strain>GB-M1</strain>
    </source>
</reference>